<reference key="1">
    <citation type="journal article" date="1994" name="Science">
        <title>14-3-3 protein homologs required for the DNA damage checkpoint in fission yeast.</title>
        <authorList>
            <person name="Ford J.C."/>
            <person name="Al-Khodairy F."/>
            <person name="Fotou E."/>
            <person name="Sheldrick K.S."/>
            <person name="Griffiths D.J.F."/>
            <person name="Carr A.M."/>
        </authorList>
    </citation>
    <scope>NUCLEOTIDE SEQUENCE [GENOMIC DNA]</scope>
    <scope>FUNCTION</scope>
</reference>
<reference key="2">
    <citation type="journal article" date="2002" name="Mol. Cell. Biol.">
        <title>The 14-3-3 proteins Rad24 and Rad25 negatively regulate Byr2 by affecting its localization in Schizosaccharomyces pombe.</title>
        <authorList>
            <person name="Ozoe F."/>
            <person name="Kurokawa R."/>
            <person name="Kobayashi Y."/>
            <person name="Jeong H.T."/>
            <person name="Tanaka K."/>
            <person name="Sen K."/>
            <person name="Nakagawa T."/>
            <person name="Matsuda H."/>
            <person name="Kawamukai M."/>
        </authorList>
    </citation>
    <scope>NUCLEOTIDE SEQUENCE [MRNA]</scope>
    <scope>FUNCTION</scope>
    <scope>INTERACTION WITH BYR2 AND RAD25</scope>
    <scope>SUBCELLULAR LOCATION</scope>
</reference>
<reference key="3">
    <citation type="journal article" date="2002" name="Nature">
        <title>The genome sequence of Schizosaccharomyces pombe.</title>
        <authorList>
            <person name="Wood V."/>
            <person name="Gwilliam R."/>
            <person name="Rajandream M.A."/>
            <person name="Lyne M.H."/>
            <person name="Lyne R."/>
            <person name="Stewart A."/>
            <person name="Sgouros J.G."/>
            <person name="Peat N."/>
            <person name="Hayles J."/>
            <person name="Baker S.G."/>
            <person name="Basham D."/>
            <person name="Bowman S."/>
            <person name="Brooks K."/>
            <person name="Brown D."/>
            <person name="Brown S."/>
            <person name="Chillingworth T."/>
            <person name="Churcher C.M."/>
            <person name="Collins M."/>
            <person name="Connor R."/>
            <person name="Cronin A."/>
            <person name="Davis P."/>
            <person name="Feltwell T."/>
            <person name="Fraser A."/>
            <person name="Gentles S."/>
            <person name="Goble A."/>
            <person name="Hamlin N."/>
            <person name="Harris D.E."/>
            <person name="Hidalgo J."/>
            <person name="Hodgson G."/>
            <person name="Holroyd S."/>
            <person name="Hornsby T."/>
            <person name="Howarth S."/>
            <person name="Huckle E.J."/>
            <person name="Hunt S."/>
            <person name="Jagels K."/>
            <person name="James K.D."/>
            <person name="Jones L."/>
            <person name="Jones M."/>
            <person name="Leather S."/>
            <person name="McDonald S."/>
            <person name="McLean J."/>
            <person name="Mooney P."/>
            <person name="Moule S."/>
            <person name="Mungall K.L."/>
            <person name="Murphy L.D."/>
            <person name="Niblett D."/>
            <person name="Odell C."/>
            <person name="Oliver K."/>
            <person name="O'Neil S."/>
            <person name="Pearson D."/>
            <person name="Quail M.A."/>
            <person name="Rabbinowitsch E."/>
            <person name="Rutherford K.M."/>
            <person name="Rutter S."/>
            <person name="Saunders D."/>
            <person name="Seeger K."/>
            <person name="Sharp S."/>
            <person name="Skelton J."/>
            <person name="Simmonds M.N."/>
            <person name="Squares R."/>
            <person name="Squares S."/>
            <person name="Stevens K."/>
            <person name="Taylor K."/>
            <person name="Taylor R.G."/>
            <person name="Tivey A."/>
            <person name="Walsh S.V."/>
            <person name="Warren T."/>
            <person name="Whitehead S."/>
            <person name="Woodward J.R."/>
            <person name="Volckaert G."/>
            <person name="Aert R."/>
            <person name="Robben J."/>
            <person name="Grymonprez B."/>
            <person name="Weltjens I."/>
            <person name="Vanstreels E."/>
            <person name="Rieger M."/>
            <person name="Schaefer M."/>
            <person name="Mueller-Auer S."/>
            <person name="Gabel C."/>
            <person name="Fuchs M."/>
            <person name="Duesterhoeft A."/>
            <person name="Fritzc C."/>
            <person name="Holzer E."/>
            <person name="Moestl D."/>
            <person name="Hilbert H."/>
            <person name="Borzym K."/>
            <person name="Langer I."/>
            <person name="Beck A."/>
            <person name="Lehrach H."/>
            <person name="Reinhardt R."/>
            <person name="Pohl T.M."/>
            <person name="Eger P."/>
            <person name="Zimmermann W."/>
            <person name="Wedler H."/>
            <person name="Wambutt R."/>
            <person name="Purnelle B."/>
            <person name="Goffeau A."/>
            <person name="Cadieu E."/>
            <person name="Dreano S."/>
            <person name="Gloux S."/>
            <person name="Lelaure V."/>
            <person name="Mottier S."/>
            <person name="Galibert F."/>
            <person name="Aves S.J."/>
            <person name="Xiang Z."/>
            <person name="Hunt C."/>
            <person name="Moore K."/>
            <person name="Hurst S.M."/>
            <person name="Lucas M."/>
            <person name="Rochet M."/>
            <person name="Gaillardin C."/>
            <person name="Tallada V.A."/>
            <person name="Garzon A."/>
            <person name="Thode G."/>
            <person name="Daga R.R."/>
            <person name="Cruzado L."/>
            <person name="Jimenez J."/>
            <person name="Sanchez M."/>
            <person name="del Rey F."/>
            <person name="Benito J."/>
            <person name="Dominguez A."/>
            <person name="Revuelta J.L."/>
            <person name="Moreno S."/>
            <person name="Armstrong J."/>
            <person name="Forsburg S.L."/>
            <person name="Cerutti L."/>
            <person name="Lowe T."/>
            <person name="McCombie W.R."/>
            <person name="Paulsen I."/>
            <person name="Potashkin J."/>
            <person name="Shpakovski G.V."/>
            <person name="Ussery D."/>
            <person name="Barrell B.G."/>
            <person name="Nurse P."/>
        </authorList>
    </citation>
    <scope>NUCLEOTIDE SEQUENCE [LARGE SCALE GENOMIC DNA]</scope>
    <source>
        <strain>972 / ATCC 24843</strain>
    </source>
</reference>
<reference key="4">
    <citation type="journal article" date="2002" name="Curr. Biol.">
        <title>14-3-3 protein interferes with the binding of RNA to the phosphorylated form of fission yeast meiotic regulator Mei2p.</title>
        <authorList>
            <person name="Sato M."/>
            <person name="Watanabe Y."/>
            <person name="Akiyoshi Y."/>
            <person name="Yamamoto M."/>
        </authorList>
    </citation>
    <scope>FUNCTION</scope>
    <scope>INTERACTION WITH MEI2</scope>
</reference>
<reference key="5">
    <citation type="journal article" date="2005" name="Mol. Cell">
        <title>Inactivation of the Cdc25 phosphatase by the stress-activated Srk1 kinase in fission yeast.</title>
        <authorList>
            <person name="Lopez-Aviles S."/>
            <person name="Grande M."/>
            <person name="Gonzalez M."/>
            <person name="Helgesen A.L."/>
            <person name="Alemany V."/>
            <person name="Sanchez-Piris M."/>
            <person name="Bachs O."/>
            <person name="Millar J.B."/>
            <person name="Aligue R."/>
        </authorList>
    </citation>
    <scope>FUNCTION</scope>
    <scope>INTERACTION WITH CDC25</scope>
</reference>
<reference key="6">
    <citation type="journal article" date="2008" name="J. Proteome Res.">
        <title>Phosphoproteome analysis of fission yeast.</title>
        <authorList>
            <person name="Wilson-Grady J.T."/>
            <person name="Villen J."/>
            <person name="Gygi S.P."/>
        </authorList>
    </citation>
    <scope>PHOSPHORYLATION [LARGE SCALE ANALYSIS] AT SER-34 AND SER-66</scope>
    <scope>IDENTIFICATION BY MASS SPECTROMETRY</scope>
</reference>
<evidence type="ECO:0000256" key="1">
    <source>
        <dbReference type="SAM" id="MobiDB-lite"/>
    </source>
</evidence>
<evidence type="ECO:0000269" key="2">
    <source>
    </source>
</evidence>
<evidence type="ECO:0000269" key="3">
    <source>
    </source>
</evidence>
<evidence type="ECO:0000269" key="4">
    <source>
    </source>
</evidence>
<evidence type="ECO:0000269" key="5">
    <source>
    </source>
</evidence>
<evidence type="ECO:0000269" key="6">
    <source>
    </source>
</evidence>
<evidence type="ECO:0000305" key="7"/>
<evidence type="ECO:0000305" key="8">
    <source>
    </source>
</evidence>
<evidence type="ECO:0000312" key="9">
    <source>
        <dbReference type="PomBase" id="SPAC8E11.02c"/>
    </source>
</evidence>
<keyword id="KW-0131">Cell cycle</keyword>
<keyword id="KW-0963">Cytoplasm</keyword>
<keyword id="KW-0227">DNA damage</keyword>
<keyword id="KW-0469">Meiosis</keyword>
<keyword id="KW-0597">Phosphoprotein</keyword>
<keyword id="KW-1185">Reference proteome</keyword>
<sequence>MSTTSREDAVYLAKLAEQAERYEGMVENMKSVASTDQELTVEERNLLSVAYKNVIGARRASWRIVSSIEQKEESKGNTAQVELIKEYRQKIEQELDTICQDILTVLEKHLIPNAASAESKVFYYKMKGDYYRYLAEFAVGEKRQHSADQSLEGYKAASEIATAELAPTHPIRLGLALNFSVFYYEILNSPDRACYLAKQAFDEAISELDSLSEESYKDSTLIMQLLRDNLTLWTSDAEYSAAAAGGNTEGAQENAPSNAPEGEAEPKADA</sequence>
<name>RAD24_SCHPO</name>
<organism>
    <name type="scientific">Schizosaccharomyces pombe (strain 972 / ATCC 24843)</name>
    <name type="common">Fission yeast</name>
    <dbReference type="NCBI Taxonomy" id="284812"/>
    <lineage>
        <taxon>Eukaryota</taxon>
        <taxon>Fungi</taxon>
        <taxon>Dikarya</taxon>
        <taxon>Ascomycota</taxon>
        <taxon>Taphrinomycotina</taxon>
        <taxon>Schizosaccharomycetes</taxon>
        <taxon>Schizosaccharomycetales</taxon>
        <taxon>Schizosaccharomycetaceae</taxon>
        <taxon>Schizosaccharomyces</taxon>
    </lineage>
</organism>
<protein>
    <recommendedName>
        <fullName>Checkpoint signal transducer rad24</fullName>
    </recommendedName>
</protein>
<dbReference type="EMBL" id="X79206">
    <property type="protein sequence ID" value="CAA55795.1"/>
    <property type="molecule type" value="Genomic_DNA"/>
</dbReference>
<dbReference type="EMBL" id="AB010899">
    <property type="protein sequence ID" value="BAA24800.1"/>
    <property type="molecule type" value="mRNA"/>
</dbReference>
<dbReference type="EMBL" id="AB008545">
    <property type="protein sequence ID" value="BAA28672.1"/>
    <property type="molecule type" value="Genomic_DNA"/>
</dbReference>
<dbReference type="EMBL" id="CU329670">
    <property type="protein sequence ID" value="CAA17023.1"/>
    <property type="molecule type" value="Genomic_DNA"/>
</dbReference>
<dbReference type="PIR" id="T39156">
    <property type="entry name" value="T39156"/>
</dbReference>
<dbReference type="PIR" id="T43316">
    <property type="entry name" value="T43316"/>
</dbReference>
<dbReference type="PIR" id="T45211">
    <property type="entry name" value="T45211"/>
</dbReference>
<dbReference type="RefSeq" id="NP_594167.1">
    <property type="nucleotide sequence ID" value="NM_001019591.2"/>
</dbReference>
<dbReference type="SMR" id="P42656"/>
<dbReference type="BioGRID" id="278511">
    <property type="interactions" value="99"/>
</dbReference>
<dbReference type="ELM" id="P42656"/>
<dbReference type="FunCoup" id="P42656">
    <property type="interactions" value="630"/>
</dbReference>
<dbReference type="IntAct" id="P42656">
    <property type="interactions" value="3"/>
</dbReference>
<dbReference type="STRING" id="284812.P42656"/>
<dbReference type="iPTMnet" id="P42656"/>
<dbReference type="SwissPalm" id="P42656"/>
<dbReference type="PaxDb" id="4896-SPAC8E11.02c.1"/>
<dbReference type="EnsemblFungi" id="SPAC8E11.02c.1">
    <property type="protein sequence ID" value="SPAC8E11.02c.1:pep"/>
    <property type="gene ID" value="SPAC8E11.02c"/>
</dbReference>
<dbReference type="GeneID" id="2542029"/>
<dbReference type="KEGG" id="spo:2542029"/>
<dbReference type="PomBase" id="SPAC8E11.02c">
    <property type="gene designation" value="rad24"/>
</dbReference>
<dbReference type="VEuPathDB" id="FungiDB:SPAC8E11.02c"/>
<dbReference type="eggNOG" id="KOG0841">
    <property type="taxonomic scope" value="Eukaryota"/>
</dbReference>
<dbReference type="HOGENOM" id="CLU_058290_0_0_1"/>
<dbReference type="InParanoid" id="P42656"/>
<dbReference type="OMA" id="KGCQLAR"/>
<dbReference type="PhylomeDB" id="P42656"/>
<dbReference type="Reactome" id="R-SPO-3371453">
    <property type="pathway name" value="Regulation of HSF1-mediated heat shock response"/>
</dbReference>
<dbReference type="Reactome" id="R-SPO-3371511">
    <property type="pathway name" value="HSF1 activation"/>
</dbReference>
<dbReference type="Reactome" id="R-SPO-5625740">
    <property type="pathway name" value="RHO GTPases activate PKNs"/>
</dbReference>
<dbReference type="Reactome" id="R-SPO-5628897">
    <property type="pathway name" value="TP53 Regulates Metabolic Genes"/>
</dbReference>
<dbReference type="Reactome" id="R-SPO-75035">
    <property type="pathway name" value="Chk1/Chk2(Cds1) mediated inactivation of Cyclin B:Cdk1 complex"/>
</dbReference>
<dbReference type="PRO" id="PR:P42656"/>
<dbReference type="Proteomes" id="UP000002485">
    <property type="component" value="Chromosome I"/>
</dbReference>
<dbReference type="GO" id="GO:0032153">
    <property type="term" value="C:cell division site"/>
    <property type="evidence" value="ECO:0000314"/>
    <property type="project" value="PomBase"/>
</dbReference>
<dbReference type="GO" id="GO:0005737">
    <property type="term" value="C:cytoplasm"/>
    <property type="evidence" value="ECO:0000314"/>
    <property type="project" value="PomBase"/>
</dbReference>
<dbReference type="GO" id="GO:0005829">
    <property type="term" value="C:cytosol"/>
    <property type="evidence" value="ECO:0007005"/>
    <property type="project" value="PomBase"/>
</dbReference>
<dbReference type="GO" id="GO:0120106">
    <property type="term" value="C:mitotic actomyosin contractile ring, distal actin filament layer"/>
    <property type="evidence" value="ECO:0000314"/>
    <property type="project" value="PomBase"/>
</dbReference>
<dbReference type="GO" id="GO:0072686">
    <property type="term" value="C:mitotic spindle"/>
    <property type="evidence" value="ECO:0000314"/>
    <property type="project" value="PomBase"/>
</dbReference>
<dbReference type="GO" id="GO:1990023">
    <property type="term" value="C:mitotic spindle midzone"/>
    <property type="evidence" value="ECO:0000314"/>
    <property type="project" value="PomBase"/>
</dbReference>
<dbReference type="GO" id="GO:0044732">
    <property type="term" value="C:mitotic spindle pole body"/>
    <property type="evidence" value="ECO:0007005"/>
    <property type="project" value="PomBase"/>
</dbReference>
<dbReference type="GO" id="GO:0005634">
    <property type="term" value="C:nucleus"/>
    <property type="evidence" value="ECO:0000314"/>
    <property type="project" value="PomBase"/>
</dbReference>
<dbReference type="GO" id="GO:0140311">
    <property type="term" value="F:protein sequestering activity"/>
    <property type="evidence" value="ECO:0000315"/>
    <property type="project" value="PomBase"/>
</dbReference>
<dbReference type="GO" id="GO:0034605">
    <property type="term" value="P:cellular response to heat"/>
    <property type="evidence" value="ECO:0000269"/>
    <property type="project" value="PomBase"/>
</dbReference>
<dbReference type="GO" id="GO:0051321">
    <property type="term" value="P:meiotic cell cycle"/>
    <property type="evidence" value="ECO:0007669"/>
    <property type="project" value="UniProtKB-KW"/>
</dbReference>
<dbReference type="GO" id="GO:0044878">
    <property type="term" value="P:mitotic cytokinesis checkpoint signaling"/>
    <property type="evidence" value="ECO:0000315"/>
    <property type="project" value="PomBase"/>
</dbReference>
<dbReference type="GO" id="GO:0033314">
    <property type="term" value="P:mitotic DNA replication checkpoint signaling"/>
    <property type="evidence" value="ECO:0000315"/>
    <property type="project" value="PomBase"/>
</dbReference>
<dbReference type="GO" id="GO:0007095">
    <property type="term" value="P:mitotic G2 DNA damage checkpoint signaling"/>
    <property type="evidence" value="ECO:0000315"/>
    <property type="project" value="PomBase"/>
</dbReference>
<dbReference type="GO" id="GO:0010515">
    <property type="term" value="P:negative regulation of induction of conjugation with cellular fusion"/>
    <property type="evidence" value="ECO:0000315"/>
    <property type="project" value="PomBase"/>
</dbReference>
<dbReference type="GO" id="GO:0008104">
    <property type="term" value="P:protein localization"/>
    <property type="evidence" value="ECO:0000318"/>
    <property type="project" value="GO_Central"/>
</dbReference>
<dbReference type="GO" id="GO:0007165">
    <property type="term" value="P:signal transduction"/>
    <property type="evidence" value="ECO:0000318"/>
    <property type="project" value="GO_Central"/>
</dbReference>
<dbReference type="FunFam" id="1.20.190.20:FF:000002">
    <property type="entry name" value="14-3-3 protein epsilon"/>
    <property type="match status" value="1"/>
</dbReference>
<dbReference type="Gene3D" id="1.20.190.20">
    <property type="entry name" value="14-3-3 domain"/>
    <property type="match status" value="1"/>
</dbReference>
<dbReference type="InterPro" id="IPR000308">
    <property type="entry name" value="14-3-3"/>
</dbReference>
<dbReference type="InterPro" id="IPR023409">
    <property type="entry name" value="14-3-3_CS"/>
</dbReference>
<dbReference type="InterPro" id="IPR036815">
    <property type="entry name" value="14-3-3_dom_sf"/>
</dbReference>
<dbReference type="InterPro" id="IPR023410">
    <property type="entry name" value="14-3-3_domain"/>
</dbReference>
<dbReference type="PANTHER" id="PTHR18860">
    <property type="entry name" value="14-3-3 PROTEIN"/>
    <property type="match status" value="1"/>
</dbReference>
<dbReference type="Pfam" id="PF00244">
    <property type="entry name" value="14-3-3"/>
    <property type="match status" value="1"/>
</dbReference>
<dbReference type="PIRSF" id="PIRSF000868">
    <property type="entry name" value="14-3-3"/>
    <property type="match status" value="1"/>
</dbReference>
<dbReference type="PRINTS" id="PR00305">
    <property type="entry name" value="1433ZETA"/>
</dbReference>
<dbReference type="SMART" id="SM00101">
    <property type="entry name" value="14_3_3"/>
    <property type="match status" value="1"/>
</dbReference>
<dbReference type="SUPFAM" id="SSF48445">
    <property type="entry name" value="14-3-3 protein"/>
    <property type="match status" value="1"/>
</dbReference>
<dbReference type="PROSITE" id="PS00796">
    <property type="entry name" value="1433_1"/>
    <property type="match status" value="1"/>
</dbReference>
<dbReference type="PROSITE" id="PS00797">
    <property type="entry name" value="1433_2"/>
    <property type="match status" value="1"/>
</dbReference>
<accession>P42656</accession>
<accession>O42704</accession>
<accession>O42879</accession>
<gene>
    <name evidence="9" type="primary">rad24</name>
    <name evidence="9" type="ORF">SPAC8E11.02c</name>
</gene>
<feature type="chain" id="PRO_0000058717" description="Checkpoint signal transducer rad24">
    <location>
        <begin position="1"/>
        <end position="270"/>
    </location>
</feature>
<feature type="region of interest" description="Disordered" evidence="1">
    <location>
        <begin position="242"/>
        <end position="270"/>
    </location>
</feature>
<feature type="modified residue" description="Phosphoserine" evidence="5">
    <location>
        <position position="34"/>
    </location>
</feature>
<feature type="modified residue" description="Phosphoserine" evidence="5">
    <location>
        <position position="66"/>
    </location>
</feature>
<feature type="sequence conflict" description="In Ref. 2; BAA24800." evidence="7" ref="2">
    <original>S</original>
    <variation>F</variation>
    <location>
        <position position="219"/>
    </location>
</feature>
<feature type="sequence conflict" description="In Ref. 1; CAA55795." evidence="7" ref="1">
    <original>A</original>
    <variation>R</variation>
    <location>
        <position position="264"/>
    </location>
</feature>
<feature type="sequence conflict" description="In Ref. 1; CAA55795." evidence="7" ref="1">
    <original>DA</original>
    <variation>THR</variation>
    <location>
        <begin position="269"/>
        <end position="270"/>
    </location>
</feature>
<proteinExistence type="evidence at protein level"/>
<comment type="function">
    <text evidence="2 3 4 6">Acts in cell cycle and stress checkpoint signaling by sequestering signal transducers regulated by the checkpoints (PubMed:11818066, PubMed:15629716, PubMed:8036497). Required for the DNA damage checkpoint that ensures that DNA damage is repaired before mitosis is attempted (PubMed:8036497). During environmental stress, sequesters srk1-phosphorylated cdc25 in the cytoplasm to delay the G2/M transition (PubMed:15629716). Sequesters byr2 in the cytoplasm to prevent its translocation to the plasma membrane (PubMed:12242289). Sequesters ran1/pat1-phosphorylated mei2 from its non-coding RNA activators (including meiRNA), to prevent meiotic induction in vegetative cells and to regulate meiosis I (PubMed:11818066).</text>
</comment>
<comment type="subunit">
    <text evidence="2 3 4">Homodimer (PubMed:12242289). Binds preferentially to mei2 phosphorylated by ran1/pat1 (PubMed:11818066). Binds preferentially to cdc25 phosphorylated by srk1 during G2; the interaction is increased during osmotic stress (PubMed:15629716). Interacts with byr2 (PubMed:12242289). Interacts with rad25 (PubMed:12242289).</text>
</comment>
<comment type="interaction">
    <interactant intactId="EBI-704791">
        <id>P42656</id>
    </interactant>
    <interactant intactId="EBI-704737">
        <id>Q9P7H1</id>
        <label>clp1</label>
    </interactant>
    <organismsDiffer>false</organismsDiffer>
    <experiments>3</experiments>
</comment>
<comment type="subcellular location">
    <subcellularLocation>
        <location evidence="8">Cytoplasm</location>
    </subcellularLocation>
</comment>
<comment type="similarity">
    <text evidence="7">Belongs to the 14-3-3 family.</text>
</comment>